<dbReference type="EMBL" id="AK032375">
    <property type="protein sequence ID" value="BAC27843.1"/>
    <property type="molecule type" value="mRNA"/>
</dbReference>
<dbReference type="EMBL" id="AK034329">
    <property type="protein sequence ID" value="BAC28676.1"/>
    <property type="molecule type" value="mRNA"/>
</dbReference>
<dbReference type="CCDS" id="CCDS14930.1"/>
<dbReference type="RefSeq" id="NP_001343975.1">
    <property type="nucleotide sequence ID" value="NM_001357046.1"/>
</dbReference>
<dbReference type="RefSeq" id="NP_001343976.1">
    <property type="nucleotide sequence ID" value="NM_001357047.1"/>
</dbReference>
<dbReference type="RefSeq" id="NP_001343977.1">
    <property type="nucleotide sequence ID" value="NM_001357048.1"/>
</dbReference>
<dbReference type="RefSeq" id="NP_653141.3">
    <property type="nucleotide sequence ID" value="NM_144558.4"/>
</dbReference>
<dbReference type="RefSeq" id="XP_006496061.2">
    <property type="nucleotide sequence ID" value="XM_006495998.3"/>
</dbReference>
<dbReference type="RefSeq" id="XP_006496063.1">
    <property type="nucleotide sequence ID" value="XM_006496000.2"/>
</dbReference>
<dbReference type="RefSeq" id="XP_006496065.1">
    <property type="nucleotide sequence ID" value="XM_006496002.2"/>
</dbReference>
<dbReference type="RefSeq" id="XP_006496067.1">
    <property type="nucleotide sequence ID" value="XM_006496004.4"/>
</dbReference>
<dbReference type="RefSeq" id="XP_017176210.1">
    <property type="nucleotide sequence ID" value="XM_017320721.3"/>
</dbReference>
<dbReference type="RefSeq" id="XP_030110153.1">
    <property type="nucleotide sequence ID" value="XM_030254293.1"/>
</dbReference>
<dbReference type="RefSeq" id="XP_030110159.1">
    <property type="nucleotide sequence ID" value="XM_030254299.2"/>
</dbReference>
<dbReference type="RefSeq" id="XP_036021012.1">
    <property type="nucleotide sequence ID" value="XM_036165119.1"/>
</dbReference>
<dbReference type="RefSeq" id="XP_036021013.1">
    <property type="nucleotide sequence ID" value="XM_036165120.1"/>
</dbReference>
<dbReference type="FunCoup" id="Q8CBX9">
    <property type="interactions" value="1321"/>
</dbReference>
<dbReference type="STRING" id="10090.ENSMUSP00000110357"/>
<dbReference type="iPTMnet" id="Q8CBX9"/>
<dbReference type="PhosphoSitePlus" id="Q8CBX9"/>
<dbReference type="PaxDb" id="10090-ENSMUSP00000110357"/>
<dbReference type="ProteomicsDB" id="273495"/>
<dbReference type="DNASU" id="246229"/>
<dbReference type="Ensembl" id="ENSMUST00000035991.8">
    <property type="protein sequence ID" value="ENSMUSP00000041964.2"/>
    <property type="gene ID" value="ENSMUSG00000041684.12"/>
</dbReference>
<dbReference type="Ensembl" id="ENSMUST00000114709.3">
    <property type="protein sequence ID" value="ENSMUSP00000110357.3"/>
    <property type="gene ID" value="ENSMUSG00000041684.12"/>
</dbReference>
<dbReference type="GeneID" id="246229"/>
<dbReference type="KEGG" id="mmu:246229"/>
<dbReference type="UCSC" id="uc007awd.2">
    <property type="organism name" value="mouse"/>
</dbReference>
<dbReference type="AGR" id="MGI:2179809"/>
<dbReference type="CTD" id="54841"/>
<dbReference type="MGI" id="MGI:2179809">
    <property type="gene designation" value="Bivm"/>
</dbReference>
<dbReference type="VEuPathDB" id="HostDB:ENSMUSG00000041684"/>
<dbReference type="eggNOG" id="ENOG502QUM8">
    <property type="taxonomic scope" value="Eukaryota"/>
</dbReference>
<dbReference type="GeneTree" id="ENSGT00510000048601"/>
<dbReference type="HOGENOM" id="CLU_041921_1_0_1"/>
<dbReference type="InParanoid" id="Q8CBX9"/>
<dbReference type="OMA" id="HCLMAFQ"/>
<dbReference type="OrthoDB" id="31113at2759"/>
<dbReference type="PhylomeDB" id="Q8CBX9"/>
<dbReference type="TreeFam" id="TF331304"/>
<dbReference type="BioGRID-ORCS" id="246229">
    <property type="hits" value="1 hit in 76 CRISPR screens"/>
</dbReference>
<dbReference type="ChiTaRS" id="Bivm">
    <property type="organism name" value="mouse"/>
</dbReference>
<dbReference type="PRO" id="PR:Q8CBX9"/>
<dbReference type="Proteomes" id="UP000000589">
    <property type="component" value="Chromosome 1"/>
</dbReference>
<dbReference type="RNAct" id="Q8CBX9">
    <property type="molecule type" value="protein"/>
</dbReference>
<dbReference type="Bgee" id="ENSMUSG00000041684">
    <property type="expression patterns" value="Expressed in renal medulla interstitium and 216 other cell types or tissues"/>
</dbReference>
<dbReference type="ExpressionAtlas" id="Q8CBX9">
    <property type="expression patterns" value="baseline and differential"/>
</dbReference>
<dbReference type="GO" id="GO:0005737">
    <property type="term" value="C:cytoplasm"/>
    <property type="evidence" value="ECO:0007669"/>
    <property type="project" value="UniProtKB-SubCell"/>
</dbReference>
<dbReference type="GO" id="GO:0005634">
    <property type="term" value="C:nucleus"/>
    <property type="evidence" value="ECO:0007669"/>
    <property type="project" value="UniProtKB-SubCell"/>
</dbReference>
<dbReference type="PANTHER" id="PTHR16171:SF13">
    <property type="entry name" value="BASIC IMMUNOGLOBULIN-LIKE VARIABLE MOTIF-CONTAINING PROTEIN"/>
    <property type="match status" value="1"/>
</dbReference>
<dbReference type="PANTHER" id="PTHR16171">
    <property type="entry name" value="DNA REPAIR PROTEIN COMPLEMENTING XP-G CELLS-RELATED"/>
    <property type="match status" value="1"/>
</dbReference>
<organism>
    <name type="scientific">Mus musculus</name>
    <name type="common">Mouse</name>
    <dbReference type="NCBI Taxonomy" id="10090"/>
    <lineage>
        <taxon>Eukaryota</taxon>
        <taxon>Metazoa</taxon>
        <taxon>Chordata</taxon>
        <taxon>Craniata</taxon>
        <taxon>Vertebrata</taxon>
        <taxon>Euteleostomi</taxon>
        <taxon>Mammalia</taxon>
        <taxon>Eutheria</taxon>
        <taxon>Euarchontoglires</taxon>
        <taxon>Glires</taxon>
        <taxon>Rodentia</taxon>
        <taxon>Myomorpha</taxon>
        <taxon>Muroidea</taxon>
        <taxon>Muridae</taxon>
        <taxon>Murinae</taxon>
        <taxon>Mus</taxon>
        <taxon>Mus</taxon>
    </lineage>
</organism>
<comment type="subcellular location">
    <subcellularLocation>
        <location evidence="1">Cytoplasm</location>
    </subcellularLocation>
    <subcellularLocation>
        <location evidence="1">Nucleus</location>
    </subcellularLocation>
</comment>
<comment type="similarity">
    <text evidence="3">Belongs to the BIVM family.</text>
</comment>
<accession>Q8CBX9</accession>
<accession>Q8CCP3</accession>
<evidence type="ECO:0000250" key="1"/>
<evidence type="ECO:0000256" key="2">
    <source>
        <dbReference type="SAM" id="MobiDB-lite"/>
    </source>
</evidence>
<evidence type="ECO:0000305" key="3"/>
<keyword id="KW-0963">Cytoplasm</keyword>
<keyword id="KW-0539">Nucleus</keyword>
<keyword id="KW-1185">Reference proteome</keyword>
<proteinExistence type="evidence at transcript level"/>
<gene>
    <name type="primary">Bivm</name>
</gene>
<protein>
    <recommendedName>
        <fullName>Basic immunoglobulin-like variable motif-containing protein</fullName>
    </recommendedName>
</protein>
<sequence>MPNATEAGKATDPGHGEHTSENKSPEEGLQGAVPSFYTSASEAPIAPRGDGHYPSSCPVTHTREKIYAICSDYAFLNQATSVYKTPSLTRSACLPDNTSLSAGNTTRYIGISTSTSEIIYNEENNLENLSTGMGKLPLAWEIDKSEFDGVTTNLIHKSGNVKKQFSKKKTSDKKGRHQRECLHYSPLDDVKQRKVLDLRRWYCISRPQYKTSCGISSLISCWNFLYSIMGAGNLPPITQEEALHILGFQPPFEDIRFGPFTGNTTLMRWFRQINDHFHVKGCSYVLYKPHGKNKTAGETAPGALSKLTRGLKDESLAYIYHCQNHYFCPIGFEATPVKANKAFSRGPLSSQEVEYWILIGESSRKHPAIHCKRWADIVTDLNTQNPEFLDIRHLERGLQFRKTKKVGGNLHCIIAFQRLSWQRFGFWNFPFGTITQESQHPTHVPGIAKSESEDNISKKQHGRLGRSFSASFHQDSAWKNMSSIHERRNSGYHSFRDYNGND</sequence>
<feature type="chain" id="PRO_0000328956" description="Basic immunoglobulin-like variable motif-containing protein">
    <location>
        <begin position="1"/>
        <end position="502"/>
    </location>
</feature>
<feature type="region of interest" description="Disordered" evidence="2">
    <location>
        <begin position="1"/>
        <end position="32"/>
    </location>
</feature>
<feature type="region of interest" description="Disordered" evidence="2">
    <location>
        <begin position="438"/>
        <end position="460"/>
    </location>
</feature>
<feature type="compositionally biased region" description="Basic and acidic residues" evidence="2">
    <location>
        <begin position="12"/>
        <end position="26"/>
    </location>
</feature>
<feature type="sequence conflict" description="In Ref. 1; BAC27843." evidence="3" ref="1">
    <original>W</original>
    <variation>C</variation>
    <location>
        <position position="356"/>
    </location>
</feature>
<feature type="sequence conflict" description="In Ref. 1; BAC27843." evidence="3" ref="1">
    <original>L</original>
    <variation>V</variation>
    <location>
        <position position="381"/>
    </location>
</feature>
<feature type="sequence conflict" description="In Ref. 1; BAC27843." evidence="3" ref="1">
    <original>F</original>
    <variation>L</variation>
    <location>
        <position position="388"/>
    </location>
</feature>
<name>BIVM_MOUSE</name>
<reference key="1">
    <citation type="journal article" date="2005" name="Science">
        <title>The transcriptional landscape of the mammalian genome.</title>
        <authorList>
            <person name="Carninci P."/>
            <person name="Kasukawa T."/>
            <person name="Katayama S."/>
            <person name="Gough J."/>
            <person name="Frith M.C."/>
            <person name="Maeda N."/>
            <person name="Oyama R."/>
            <person name="Ravasi T."/>
            <person name="Lenhard B."/>
            <person name="Wells C."/>
            <person name="Kodzius R."/>
            <person name="Shimokawa K."/>
            <person name="Bajic V.B."/>
            <person name="Brenner S.E."/>
            <person name="Batalov S."/>
            <person name="Forrest A.R."/>
            <person name="Zavolan M."/>
            <person name="Davis M.J."/>
            <person name="Wilming L.G."/>
            <person name="Aidinis V."/>
            <person name="Allen J.E."/>
            <person name="Ambesi-Impiombato A."/>
            <person name="Apweiler R."/>
            <person name="Aturaliya R.N."/>
            <person name="Bailey T.L."/>
            <person name="Bansal M."/>
            <person name="Baxter L."/>
            <person name="Beisel K.W."/>
            <person name="Bersano T."/>
            <person name="Bono H."/>
            <person name="Chalk A.M."/>
            <person name="Chiu K.P."/>
            <person name="Choudhary V."/>
            <person name="Christoffels A."/>
            <person name="Clutterbuck D.R."/>
            <person name="Crowe M.L."/>
            <person name="Dalla E."/>
            <person name="Dalrymple B.P."/>
            <person name="de Bono B."/>
            <person name="Della Gatta G."/>
            <person name="di Bernardo D."/>
            <person name="Down T."/>
            <person name="Engstrom P."/>
            <person name="Fagiolini M."/>
            <person name="Faulkner G."/>
            <person name="Fletcher C.F."/>
            <person name="Fukushima T."/>
            <person name="Furuno M."/>
            <person name="Futaki S."/>
            <person name="Gariboldi M."/>
            <person name="Georgii-Hemming P."/>
            <person name="Gingeras T.R."/>
            <person name="Gojobori T."/>
            <person name="Green R.E."/>
            <person name="Gustincich S."/>
            <person name="Harbers M."/>
            <person name="Hayashi Y."/>
            <person name="Hensch T.K."/>
            <person name="Hirokawa N."/>
            <person name="Hill D."/>
            <person name="Huminiecki L."/>
            <person name="Iacono M."/>
            <person name="Ikeo K."/>
            <person name="Iwama A."/>
            <person name="Ishikawa T."/>
            <person name="Jakt M."/>
            <person name="Kanapin A."/>
            <person name="Katoh M."/>
            <person name="Kawasawa Y."/>
            <person name="Kelso J."/>
            <person name="Kitamura H."/>
            <person name="Kitano H."/>
            <person name="Kollias G."/>
            <person name="Krishnan S.P."/>
            <person name="Kruger A."/>
            <person name="Kummerfeld S.K."/>
            <person name="Kurochkin I.V."/>
            <person name="Lareau L.F."/>
            <person name="Lazarevic D."/>
            <person name="Lipovich L."/>
            <person name="Liu J."/>
            <person name="Liuni S."/>
            <person name="McWilliam S."/>
            <person name="Madan Babu M."/>
            <person name="Madera M."/>
            <person name="Marchionni L."/>
            <person name="Matsuda H."/>
            <person name="Matsuzawa S."/>
            <person name="Miki H."/>
            <person name="Mignone F."/>
            <person name="Miyake S."/>
            <person name="Morris K."/>
            <person name="Mottagui-Tabar S."/>
            <person name="Mulder N."/>
            <person name="Nakano N."/>
            <person name="Nakauchi H."/>
            <person name="Ng P."/>
            <person name="Nilsson R."/>
            <person name="Nishiguchi S."/>
            <person name="Nishikawa S."/>
            <person name="Nori F."/>
            <person name="Ohara O."/>
            <person name="Okazaki Y."/>
            <person name="Orlando V."/>
            <person name="Pang K.C."/>
            <person name="Pavan W.J."/>
            <person name="Pavesi G."/>
            <person name="Pesole G."/>
            <person name="Petrovsky N."/>
            <person name="Piazza S."/>
            <person name="Reed J."/>
            <person name="Reid J.F."/>
            <person name="Ring B.Z."/>
            <person name="Ringwald M."/>
            <person name="Rost B."/>
            <person name="Ruan Y."/>
            <person name="Salzberg S.L."/>
            <person name="Sandelin A."/>
            <person name="Schneider C."/>
            <person name="Schoenbach C."/>
            <person name="Sekiguchi K."/>
            <person name="Semple C.A."/>
            <person name="Seno S."/>
            <person name="Sessa L."/>
            <person name="Sheng Y."/>
            <person name="Shibata Y."/>
            <person name="Shimada H."/>
            <person name="Shimada K."/>
            <person name="Silva D."/>
            <person name="Sinclair B."/>
            <person name="Sperling S."/>
            <person name="Stupka E."/>
            <person name="Sugiura K."/>
            <person name="Sultana R."/>
            <person name="Takenaka Y."/>
            <person name="Taki K."/>
            <person name="Tammoja K."/>
            <person name="Tan S.L."/>
            <person name="Tang S."/>
            <person name="Taylor M.S."/>
            <person name="Tegner J."/>
            <person name="Teichmann S.A."/>
            <person name="Ueda H.R."/>
            <person name="van Nimwegen E."/>
            <person name="Verardo R."/>
            <person name="Wei C.L."/>
            <person name="Yagi K."/>
            <person name="Yamanishi H."/>
            <person name="Zabarovsky E."/>
            <person name="Zhu S."/>
            <person name="Zimmer A."/>
            <person name="Hide W."/>
            <person name="Bult C."/>
            <person name="Grimmond S.M."/>
            <person name="Teasdale R.D."/>
            <person name="Liu E.T."/>
            <person name="Brusic V."/>
            <person name="Quackenbush J."/>
            <person name="Wahlestedt C."/>
            <person name="Mattick J.S."/>
            <person name="Hume D.A."/>
            <person name="Kai C."/>
            <person name="Sasaki D."/>
            <person name="Tomaru Y."/>
            <person name="Fukuda S."/>
            <person name="Kanamori-Katayama M."/>
            <person name="Suzuki M."/>
            <person name="Aoki J."/>
            <person name="Arakawa T."/>
            <person name="Iida J."/>
            <person name="Imamura K."/>
            <person name="Itoh M."/>
            <person name="Kato T."/>
            <person name="Kawaji H."/>
            <person name="Kawagashira N."/>
            <person name="Kawashima T."/>
            <person name="Kojima M."/>
            <person name="Kondo S."/>
            <person name="Konno H."/>
            <person name="Nakano K."/>
            <person name="Ninomiya N."/>
            <person name="Nishio T."/>
            <person name="Okada M."/>
            <person name="Plessy C."/>
            <person name="Shibata K."/>
            <person name="Shiraki T."/>
            <person name="Suzuki S."/>
            <person name="Tagami M."/>
            <person name="Waki K."/>
            <person name="Watahiki A."/>
            <person name="Okamura-Oho Y."/>
            <person name="Suzuki H."/>
            <person name="Kawai J."/>
            <person name="Hayashizaki Y."/>
        </authorList>
    </citation>
    <scope>NUCLEOTIDE SEQUENCE [LARGE SCALE MRNA]</scope>
    <source>
        <strain>C57BL/6J</strain>
        <tissue>Diencephalon</tissue>
        <tissue>Olfactory bulb</tissue>
    </source>
</reference>